<feature type="initiator methionine" description="Removed" evidence="1">
    <location>
        <position position="1"/>
    </location>
</feature>
<feature type="chain" id="PRO_0000056922" description="Asparagine synthetase [glutamine-hydrolyzing] 1">
    <location>
        <begin position="2"/>
        <end position="586"/>
    </location>
</feature>
<feature type="domain" description="Glutamine amidotransferase type-2" evidence="2">
    <location>
        <begin position="2"/>
        <end position="185"/>
    </location>
</feature>
<feature type="domain" description="Asparagine synthetase">
    <location>
        <begin position="193"/>
        <end position="516"/>
    </location>
</feature>
<feature type="active site" description="For GATase activity" evidence="1">
    <location>
        <position position="2"/>
    </location>
</feature>
<feature type="binding site" evidence="1">
    <location>
        <begin position="50"/>
        <end position="54"/>
    </location>
    <ligand>
        <name>L-glutamine</name>
        <dbReference type="ChEBI" id="CHEBI:58359"/>
    </ligand>
</feature>
<feature type="binding site" evidence="1">
    <location>
        <begin position="75"/>
        <end position="77"/>
    </location>
    <ligand>
        <name>L-glutamine</name>
        <dbReference type="ChEBI" id="CHEBI:58359"/>
    </ligand>
</feature>
<feature type="binding site" evidence="1">
    <location>
        <position position="98"/>
    </location>
    <ligand>
        <name>L-glutamine</name>
        <dbReference type="ChEBI" id="CHEBI:58359"/>
    </ligand>
</feature>
<feature type="binding site" evidence="1">
    <location>
        <position position="231"/>
    </location>
    <ligand>
        <name>ATP</name>
        <dbReference type="ChEBI" id="CHEBI:30616"/>
    </ligand>
</feature>
<feature type="binding site" evidence="1">
    <location>
        <position position="267"/>
    </location>
    <ligand>
        <name>ATP</name>
        <dbReference type="ChEBI" id="CHEBI:30616"/>
    </ligand>
</feature>
<feature type="binding site" evidence="1">
    <location>
        <begin position="341"/>
        <end position="342"/>
    </location>
    <ligand>
        <name>ATP</name>
        <dbReference type="ChEBI" id="CHEBI:30616"/>
    </ligand>
</feature>
<feature type="site" description="Important for beta-aspartyl-AMP intermediate formation" evidence="1">
    <location>
        <position position="343"/>
    </location>
</feature>
<organism>
    <name type="scientific">Lotus japonicus</name>
    <name type="common">Lotus corniculatus var. japonicus</name>
    <dbReference type="NCBI Taxonomy" id="34305"/>
    <lineage>
        <taxon>Eukaryota</taxon>
        <taxon>Viridiplantae</taxon>
        <taxon>Streptophyta</taxon>
        <taxon>Embryophyta</taxon>
        <taxon>Tracheophyta</taxon>
        <taxon>Spermatophyta</taxon>
        <taxon>Magnoliopsida</taxon>
        <taxon>eudicotyledons</taxon>
        <taxon>Gunneridae</taxon>
        <taxon>Pentapetalae</taxon>
        <taxon>rosids</taxon>
        <taxon>fabids</taxon>
        <taxon>Fabales</taxon>
        <taxon>Fabaceae</taxon>
        <taxon>Papilionoideae</taxon>
        <taxon>50 kb inversion clade</taxon>
        <taxon>NPAAA clade</taxon>
        <taxon>Hologalegina</taxon>
        <taxon>robinioid clade</taxon>
        <taxon>Loteae</taxon>
        <taxon>Lotus</taxon>
    </lineage>
</organism>
<evidence type="ECO:0000250" key="1"/>
<evidence type="ECO:0000255" key="2">
    <source>
        <dbReference type="PROSITE-ProRule" id="PRU00609"/>
    </source>
</evidence>
<protein>
    <recommendedName>
        <fullName>Asparagine synthetase [glutamine-hydrolyzing] 1</fullName>
        <ecNumber>6.3.5.4</ecNumber>
    </recommendedName>
    <alternativeName>
        <fullName>Glutamine-dependent asparagine synthetase 1</fullName>
    </alternativeName>
</protein>
<reference key="1">
    <citation type="journal article" date="1996" name="Plant Mol. Biol.">
        <title>Molecular cloning and characterisation of asparagine synthetase from Lotus japonicus: dynamics of asparagine synthesis in N-sufficient conditions.</title>
        <authorList>
            <person name="Waterhouse R.N."/>
            <person name="Smyth A.J."/>
            <person name="Massoneau A."/>
            <person name="Prosser I.M."/>
            <person name="Clarkson D.T."/>
        </authorList>
    </citation>
    <scope>NUCLEOTIDE SEQUENCE [MRNA]</scope>
    <source>
        <strain>cv. Gifu / B-129</strain>
    </source>
</reference>
<dbReference type="EC" id="6.3.5.4"/>
<dbReference type="EMBL" id="X89409">
    <property type="protein sequence ID" value="CAA61589.1"/>
    <property type="molecule type" value="mRNA"/>
</dbReference>
<dbReference type="PIR" id="S69182">
    <property type="entry name" value="S69182"/>
</dbReference>
<dbReference type="SMR" id="P49092"/>
<dbReference type="ProMEX" id="P49092"/>
<dbReference type="OMA" id="HYLNFHA"/>
<dbReference type="OrthoDB" id="409189at2759"/>
<dbReference type="UniPathway" id="UPA00134">
    <property type="reaction ID" value="UER00195"/>
</dbReference>
<dbReference type="GO" id="GO:0005829">
    <property type="term" value="C:cytosol"/>
    <property type="evidence" value="ECO:0007669"/>
    <property type="project" value="TreeGrafter"/>
</dbReference>
<dbReference type="GO" id="GO:0004066">
    <property type="term" value="F:asparagine synthase (glutamine-hydrolyzing) activity"/>
    <property type="evidence" value="ECO:0007669"/>
    <property type="project" value="UniProtKB-EC"/>
</dbReference>
<dbReference type="GO" id="GO:0005524">
    <property type="term" value="F:ATP binding"/>
    <property type="evidence" value="ECO:0007669"/>
    <property type="project" value="UniProtKB-KW"/>
</dbReference>
<dbReference type="GO" id="GO:0070981">
    <property type="term" value="P:L-asparagine biosynthetic process"/>
    <property type="evidence" value="ECO:0007669"/>
    <property type="project" value="UniProtKB-UniPathway"/>
</dbReference>
<dbReference type="CDD" id="cd01991">
    <property type="entry name" value="Asn_synthase_B_C"/>
    <property type="match status" value="1"/>
</dbReference>
<dbReference type="CDD" id="cd00712">
    <property type="entry name" value="AsnB"/>
    <property type="match status" value="1"/>
</dbReference>
<dbReference type="FunFam" id="3.40.50.620:FF:000055">
    <property type="entry name" value="Asparagine synthetase [glutamine-hydrolyzing]"/>
    <property type="match status" value="1"/>
</dbReference>
<dbReference type="FunFam" id="3.60.20.10:FF:000024">
    <property type="entry name" value="Asparagine synthetase [glutamine-hydrolyzing]"/>
    <property type="match status" value="1"/>
</dbReference>
<dbReference type="Gene3D" id="3.60.20.10">
    <property type="entry name" value="Glutamine Phosphoribosylpyrophosphate, subunit 1, domain 1"/>
    <property type="match status" value="1"/>
</dbReference>
<dbReference type="Gene3D" id="3.40.50.620">
    <property type="entry name" value="HUPs"/>
    <property type="match status" value="1"/>
</dbReference>
<dbReference type="InterPro" id="IPR006426">
    <property type="entry name" value="Asn_synth_AEB"/>
</dbReference>
<dbReference type="InterPro" id="IPR001962">
    <property type="entry name" value="Asn_synthase"/>
</dbReference>
<dbReference type="InterPro" id="IPR050795">
    <property type="entry name" value="Asn_Synthetase"/>
</dbReference>
<dbReference type="InterPro" id="IPR033738">
    <property type="entry name" value="AsnB_N"/>
</dbReference>
<dbReference type="InterPro" id="IPR017932">
    <property type="entry name" value="GATase_2_dom"/>
</dbReference>
<dbReference type="InterPro" id="IPR029055">
    <property type="entry name" value="Ntn_hydrolases_N"/>
</dbReference>
<dbReference type="InterPro" id="IPR014729">
    <property type="entry name" value="Rossmann-like_a/b/a_fold"/>
</dbReference>
<dbReference type="NCBIfam" id="TIGR01536">
    <property type="entry name" value="asn_synth_AEB"/>
    <property type="match status" value="1"/>
</dbReference>
<dbReference type="NCBIfam" id="NF006949">
    <property type="entry name" value="PRK09431.1"/>
    <property type="match status" value="1"/>
</dbReference>
<dbReference type="PANTHER" id="PTHR11772">
    <property type="entry name" value="ASPARAGINE SYNTHETASE"/>
    <property type="match status" value="1"/>
</dbReference>
<dbReference type="PANTHER" id="PTHR11772:SF45">
    <property type="entry name" value="ASPARAGINE SYNTHETASE [GLUTAMINE-HYDROLYZING]"/>
    <property type="match status" value="1"/>
</dbReference>
<dbReference type="Pfam" id="PF00733">
    <property type="entry name" value="Asn_synthase"/>
    <property type="match status" value="1"/>
</dbReference>
<dbReference type="Pfam" id="PF13537">
    <property type="entry name" value="GATase_7"/>
    <property type="match status" value="1"/>
</dbReference>
<dbReference type="PIRSF" id="PIRSF001589">
    <property type="entry name" value="Asn_synthetase_glu-h"/>
    <property type="match status" value="1"/>
</dbReference>
<dbReference type="SUPFAM" id="SSF52402">
    <property type="entry name" value="Adenine nucleotide alpha hydrolases-like"/>
    <property type="match status" value="1"/>
</dbReference>
<dbReference type="SUPFAM" id="SSF56235">
    <property type="entry name" value="N-terminal nucleophile aminohydrolases (Ntn hydrolases)"/>
    <property type="match status" value="1"/>
</dbReference>
<dbReference type="PROSITE" id="PS51278">
    <property type="entry name" value="GATASE_TYPE_2"/>
    <property type="match status" value="1"/>
</dbReference>
<keyword id="KW-0028">Amino-acid biosynthesis</keyword>
<keyword id="KW-0061">Asparagine biosynthesis</keyword>
<keyword id="KW-0067">ATP-binding</keyword>
<keyword id="KW-0315">Glutamine amidotransferase</keyword>
<keyword id="KW-0436">Ligase</keyword>
<keyword id="KW-0547">Nucleotide-binding</keyword>
<name>ASNS1_LOTJA</name>
<sequence>MCGILAVLGCSDFTQAKRVRVLELSRRLKHRGPDWSGLHQHGDCYLAHQRLAIVDPASGDQPLFNEDKSIIVTVNGEIYNHEELRKQLPNHQFRTGSDCDVIAHLYEEHGENFMDMLDGIFSFVLLDTRDNTFIVARDAIGVTSLYIGWGLDGSVWISSEMKGLNDDCEHFEVFPPGHLYSSRERAFRRWYNPTWFSESIPSAPYDPLAVRHAFEKAVIKRLMTDVPFGVLLSGGLDSSLVASITSRYLATTKAAEQWGSKLHSFCVGLEGSPDLKAAKEVADYLGTVHHEFTFTVQDGIDAIEEVIYHVETYDVTTIRASTPMFLMSRKIKSLGVKWVISGEGSDEIFGGYLYFHKAPNKEEFHTETCRKIKALHQYDCLRANKSTFAWGLEARVPFLDKEFINVAMNIDPEYKMIKRDEGRIEKYILRRAFDDEEKPYLPKHILYRQKEQFSDGVGYSWIDGLKDHAAKHVTDKMILNAGNIFRHNTPLTKEAYYYRMIFERFFPQNSARLTVPGGPTVACSTAKAVEWDAAWSNNLDPSGRAALGVHLSAYDDKQNNLINNKPVEFEKLIPMEAPSLGVAIHS</sequence>
<accession>P49092</accession>
<comment type="catalytic activity">
    <reaction>
        <text>L-aspartate + L-glutamine + ATP + H2O = L-asparagine + L-glutamate + AMP + diphosphate + H(+)</text>
        <dbReference type="Rhea" id="RHEA:12228"/>
        <dbReference type="ChEBI" id="CHEBI:15377"/>
        <dbReference type="ChEBI" id="CHEBI:15378"/>
        <dbReference type="ChEBI" id="CHEBI:29985"/>
        <dbReference type="ChEBI" id="CHEBI:29991"/>
        <dbReference type="ChEBI" id="CHEBI:30616"/>
        <dbReference type="ChEBI" id="CHEBI:33019"/>
        <dbReference type="ChEBI" id="CHEBI:58048"/>
        <dbReference type="ChEBI" id="CHEBI:58359"/>
        <dbReference type="ChEBI" id="CHEBI:456215"/>
        <dbReference type="EC" id="6.3.5.4"/>
    </reaction>
</comment>
<comment type="pathway">
    <text>Amino-acid biosynthesis; L-asparagine biosynthesis; L-asparagine from L-aspartate (L-Gln route): step 1/1.</text>
</comment>
<gene>
    <name type="primary">AS1</name>
</gene>
<proteinExistence type="evidence at transcript level"/>